<evidence type="ECO:0000250" key="1"/>
<evidence type="ECO:0000250" key="2">
    <source>
        <dbReference type="UniProtKB" id="P08648"/>
    </source>
</evidence>
<evidence type="ECO:0000255" key="3"/>
<evidence type="ECO:0000255" key="4">
    <source>
        <dbReference type="PROSITE-ProRule" id="PRU00219"/>
    </source>
</evidence>
<evidence type="ECO:0000255" key="5">
    <source>
        <dbReference type="PROSITE-ProRule" id="PRU00803"/>
    </source>
</evidence>
<evidence type="ECO:0000269" key="6">
    <source>
    </source>
</evidence>
<evidence type="ECO:0000269" key="7">
    <source>
    </source>
</evidence>
<evidence type="ECO:0000269" key="8">
    <source>
    </source>
</evidence>
<evidence type="ECO:0000269" key="9">
    <source>
    </source>
</evidence>
<evidence type="ECO:0000269" key="10">
    <source ref="4"/>
</evidence>
<evidence type="ECO:0000303" key="11">
    <source>
    </source>
</evidence>
<evidence type="ECO:0000305" key="12"/>
<dbReference type="EMBL" id="AF109681">
    <property type="protein sequence ID" value="AAF01258.1"/>
    <property type="molecule type" value="mRNA"/>
</dbReference>
<dbReference type="EMBL" id="AF137378">
    <property type="protein sequence ID" value="AAD51919.2"/>
    <property type="molecule type" value="mRNA"/>
</dbReference>
<dbReference type="EMBL" id="AC021553">
    <property type="status" value="NOT_ANNOTATED_CDS"/>
    <property type="molecule type" value="Genomic_DNA"/>
</dbReference>
<dbReference type="EMBL" id="AC100825">
    <property type="status" value="NOT_ANNOTATED_CDS"/>
    <property type="molecule type" value="Genomic_DNA"/>
</dbReference>
<dbReference type="EMBL" id="AF111799">
    <property type="protein sequence ID" value="AAL39001.1"/>
    <property type="status" value="ALT_INIT"/>
    <property type="molecule type" value="mRNA"/>
</dbReference>
<dbReference type="EMBL" id="AL359064">
    <property type="protein sequence ID" value="CAB94392.1"/>
    <property type="molecule type" value="mRNA"/>
</dbReference>
<dbReference type="CCDS" id="CCDS45291.1">
    <molecule id="Q9UKX5-1"/>
</dbReference>
<dbReference type="RefSeq" id="NP_001004439.1">
    <molecule id="Q9UKX5-1"/>
    <property type="nucleotide sequence ID" value="NM_001004439.2"/>
</dbReference>
<dbReference type="SMR" id="Q9UKX5"/>
<dbReference type="BioGRID" id="116481">
    <property type="interactions" value="7"/>
</dbReference>
<dbReference type="ComplexPortal" id="CPX-1818">
    <property type="entry name" value="Integrin alpha11-beta1 complex"/>
</dbReference>
<dbReference type="CORUM" id="Q9UKX5"/>
<dbReference type="FunCoup" id="Q9UKX5">
    <property type="interactions" value="508"/>
</dbReference>
<dbReference type="IntAct" id="Q9UKX5">
    <property type="interactions" value="3"/>
</dbReference>
<dbReference type="STRING" id="9606.ENSP00000327290"/>
<dbReference type="ChEMBL" id="CHEMBL5883"/>
<dbReference type="TCDB" id="8.A.54.1.7">
    <property type="family name" value="the integrin (integrin) family"/>
</dbReference>
<dbReference type="GlyCosmos" id="Q9UKX5">
    <property type="glycosylation" value="16 sites, No reported glycans"/>
</dbReference>
<dbReference type="GlyGen" id="Q9UKX5">
    <property type="glycosylation" value="17 sites, 11 N-linked glycans (4 sites), 1 O-linked glycan (1 site)"/>
</dbReference>
<dbReference type="iPTMnet" id="Q9UKX5"/>
<dbReference type="PhosphoSitePlus" id="Q9UKX5"/>
<dbReference type="BioMuta" id="ITGA11"/>
<dbReference type="DMDM" id="313104119"/>
<dbReference type="jPOST" id="Q9UKX5"/>
<dbReference type="MassIVE" id="Q9UKX5"/>
<dbReference type="PaxDb" id="9606-ENSP00000327290"/>
<dbReference type="PeptideAtlas" id="Q9UKX5"/>
<dbReference type="ProteomicsDB" id="84905">
    <molecule id="Q9UKX5-1"/>
</dbReference>
<dbReference type="Pumba" id="Q9UKX5"/>
<dbReference type="ABCD" id="Q9UKX5">
    <property type="antibodies" value="1 sequenced antibody"/>
</dbReference>
<dbReference type="Antibodypedia" id="26308">
    <property type="antibodies" value="119 antibodies from 28 providers"/>
</dbReference>
<dbReference type="CPTC" id="Q9UKX5">
    <property type="antibodies" value="1 antibody"/>
</dbReference>
<dbReference type="DNASU" id="22801"/>
<dbReference type="Ensembl" id="ENST00000315757.9">
    <molecule id="Q9UKX5-1"/>
    <property type="protein sequence ID" value="ENSP00000327290.7"/>
    <property type="gene ID" value="ENSG00000137809.17"/>
</dbReference>
<dbReference type="Ensembl" id="ENST00000423218.6">
    <molecule id="Q9UKX5-2"/>
    <property type="protein sequence ID" value="ENSP00000403392.2"/>
    <property type="gene ID" value="ENSG00000137809.17"/>
</dbReference>
<dbReference type="GeneID" id="22801"/>
<dbReference type="KEGG" id="hsa:22801"/>
<dbReference type="MANE-Select" id="ENST00000315757.9">
    <property type="protein sequence ID" value="ENSP00000327290.7"/>
    <property type="RefSeq nucleotide sequence ID" value="NM_001004439.2"/>
    <property type="RefSeq protein sequence ID" value="NP_001004439.1"/>
</dbReference>
<dbReference type="UCSC" id="uc002ari.4">
    <molecule id="Q9UKX5-1"/>
    <property type="organism name" value="human"/>
</dbReference>
<dbReference type="AGR" id="HGNC:6136"/>
<dbReference type="CTD" id="22801"/>
<dbReference type="DisGeNET" id="22801"/>
<dbReference type="GeneCards" id="ITGA11"/>
<dbReference type="HGNC" id="HGNC:6136">
    <property type="gene designation" value="ITGA11"/>
</dbReference>
<dbReference type="HPA" id="ENSG00000137809">
    <property type="expression patterns" value="Tissue enhanced (cervix, endometrium)"/>
</dbReference>
<dbReference type="MIM" id="604789">
    <property type="type" value="gene"/>
</dbReference>
<dbReference type="neXtProt" id="NX_Q9UKX5"/>
<dbReference type="OpenTargets" id="ENSG00000137809"/>
<dbReference type="PharmGKB" id="PA29937"/>
<dbReference type="VEuPathDB" id="HostDB:ENSG00000137809"/>
<dbReference type="eggNOG" id="KOG3637">
    <property type="taxonomic scope" value="Eukaryota"/>
</dbReference>
<dbReference type="GeneTree" id="ENSGT00940000155465"/>
<dbReference type="HOGENOM" id="CLU_004111_2_1_1"/>
<dbReference type="InParanoid" id="Q9UKX5"/>
<dbReference type="OMA" id="HGIGPPF"/>
<dbReference type="OrthoDB" id="5317514at2759"/>
<dbReference type="PAN-GO" id="Q9UKX5">
    <property type="GO annotations" value="7 GO annotations based on evolutionary models"/>
</dbReference>
<dbReference type="PhylomeDB" id="Q9UKX5"/>
<dbReference type="TreeFam" id="TF105391"/>
<dbReference type="PathwayCommons" id="Q9UKX5"/>
<dbReference type="Reactome" id="R-HSA-216083">
    <property type="pathway name" value="Integrin cell surface interactions"/>
</dbReference>
<dbReference type="SignaLink" id="Q9UKX5"/>
<dbReference type="SIGNOR" id="Q9UKX5"/>
<dbReference type="BioGRID-ORCS" id="22801">
    <property type="hits" value="10 hits in 1140 CRISPR screens"/>
</dbReference>
<dbReference type="ChiTaRS" id="ITGA11">
    <property type="organism name" value="human"/>
</dbReference>
<dbReference type="GenomeRNAi" id="22801"/>
<dbReference type="Pharos" id="Q9UKX5">
    <property type="development level" value="Tbio"/>
</dbReference>
<dbReference type="PRO" id="PR:Q9UKX5"/>
<dbReference type="Proteomes" id="UP000005640">
    <property type="component" value="Chromosome 15"/>
</dbReference>
<dbReference type="RNAct" id="Q9UKX5">
    <property type="molecule type" value="protein"/>
</dbReference>
<dbReference type="Bgee" id="ENSG00000137809">
    <property type="expression patterns" value="Expressed in descending thoracic aorta and 147 other cell types or tissues"/>
</dbReference>
<dbReference type="GO" id="GO:0009897">
    <property type="term" value="C:external side of plasma membrane"/>
    <property type="evidence" value="ECO:0000318"/>
    <property type="project" value="GO_Central"/>
</dbReference>
<dbReference type="GO" id="GO:0005925">
    <property type="term" value="C:focal adhesion"/>
    <property type="evidence" value="ECO:0000314"/>
    <property type="project" value="UniProtKB"/>
</dbReference>
<dbReference type="GO" id="GO:0034681">
    <property type="term" value="C:integrin alpha11-beta1 complex"/>
    <property type="evidence" value="ECO:0000314"/>
    <property type="project" value="UniProtKB"/>
</dbReference>
<dbReference type="GO" id="GO:0008305">
    <property type="term" value="C:integrin complex"/>
    <property type="evidence" value="ECO:0000318"/>
    <property type="project" value="GO_Central"/>
</dbReference>
<dbReference type="GO" id="GO:0016020">
    <property type="term" value="C:membrane"/>
    <property type="evidence" value="ECO:0007005"/>
    <property type="project" value="UniProtKB"/>
</dbReference>
<dbReference type="GO" id="GO:0005886">
    <property type="term" value="C:plasma membrane"/>
    <property type="evidence" value="ECO:0000304"/>
    <property type="project" value="Reactome"/>
</dbReference>
<dbReference type="GO" id="GO:0005518">
    <property type="term" value="F:collagen binding"/>
    <property type="evidence" value="ECO:0000315"/>
    <property type="project" value="UniProtKB"/>
</dbReference>
<dbReference type="GO" id="GO:0098639">
    <property type="term" value="F:collagen binding involved in cell-matrix adhesion"/>
    <property type="evidence" value="ECO:0000315"/>
    <property type="project" value="UniProtKB"/>
</dbReference>
<dbReference type="GO" id="GO:0038064">
    <property type="term" value="F:collagen receptor activity"/>
    <property type="evidence" value="ECO:0000315"/>
    <property type="project" value="UniProtKB"/>
</dbReference>
<dbReference type="GO" id="GO:0005178">
    <property type="term" value="F:integrin binding"/>
    <property type="evidence" value="ECO:0000318"/>
    <property type="project" value="GO_Central"/>
</dbReference>
<dbReference type="GO" id="GO:0046872">
    <property type="term" value="F:metal ion binding"/>
    <property type="evidence" value="ECO:0007669"/>
    <property type="project" value="UniProtKB-KW"/>
</dbReference>
<dbReference type="GO" id="GO:0007155">
    <property type="term" value="P:cell adhesion"/>
    <property type="evidence" value="ECO:0000304"/>
    <property type="project" value="ProtInc"/>
</dbReference>
<dbReference type="GO" id="GO:0033627">
    <property type="term" value="P:cell adhesion mediated by integrin"/>
    <property type="evidence" value="ECO:0000315"/>
    <property type="project" value="UniProtKB"/>
</dbReference>
<dbReference type="GO" id="GO:0098609">
    <property type="term" value="P:cell-cell adhesion"/>
    <property type="evidence" value="ECO:0000318"/>
    <property type="project" value="GO_Central"/>
</dbReference>
<dbReference type="GO" id="GO:0007160">
    <property type="term" value="P:cell-matrix adhesion"/>
    <property type="evidence" value="ECO:0000315"/>
    <property type="project" value="UniProtKB"/>
</dbReference>
<dbReference type="GO" id="GO:0038065">
    <property type="term" value="P:collagen-activated signaling pathway"/>
    <property type="evidence" value="ECO:0000315"/>
    <property type="project" value="UniProtKB"/>
</dbReference>
<dbReference type="GO" id="GO:0007229">
    <property type="term" value="P:integrin-mediated signaling pathway"/>
    <property type="evidence" value="ECO:0000315"/>
    <property type="project" value="UniProtKB"/>
</dbReference>
<dbReference type="GO" id="GO:0007517">
    <property type="term" value="P:muscle organ development"/>
    <property type="evidence" value="ECO:0000304"/>
    <property type="project" value="ProtInc"/>
</dbReference>
<dbReference type="GO" id="GO:0001649">
    <property type="term" value="P:osteoblast differentiation"/>
    <property type="evidence" value="ECO:0007005"/>
    <property type="project" value="UniProtKB"/>
</dbReference>
<dbReference type="GO" id="GO:0006929">
    <property type="term" value="P:substrate-dependent cell migration"/>
    <property type="evidence" value="ECO:0000315"/>
    <property type="project" value="UniProtKB"/>
</dbReference>
<dbReference type="CDD" id="cd01469">
    <property type="entry name" value="vWA_integrins_alpha_subunit"/>
    <property type="match status" value="1"/>
</dbReference>
<dbReference type="FunFam" id="2.130.10.130:FF:000001">
    <property type="entry name" value="Integrin subunit alpha 10"/>
    <property type="match status" value="1"/>
</dbReference>
<dbReference type="FunFam" id="2.130.10.130:FF:000004">
    <property type="entry name" value="Integrin subunit alpha 10"/>
    <property type="match status" value="1"/>
</dbReference>
<dbReference type="FunFam" id="2.60.40.1460:FF:000006">
    <property type="entry name" value="Integrin subunit alpha 11"/>
    <property type="match status" value="1"/>
</dbReference>
<dbReference type="FunFam" id="2.60.40.1510:FF:000015">
    <property type="entry name" value="Integrin subunit alpha 11"/>
    <property type="match status" value="1"/>
</dbReference>
<dbReference type="FunFam" id="2.60.40.1530:FF:000009">
    <property type="entry name" value="Integrin subunit alpha 11"/>
    <property type="match status" value="1"/>
</dbReference>
<dbReference type="FunFam" id="1.20.5.930:FF:000005">
    <property type="entry name" value="Integrin, alpha 10"/>
    <property type="match status" value="1"/>
</dbReference>
<dbReference type="FunFam" id="3.40.50.410:FF:000012">
    <property type="entry name" value="Integrin, alpha 10"/>
    <property type="match status" value="1"/>
</dbReference>
<dbReference type="Gene3D" id="1.20.5.930">
    <property type="entry name" value="Bicelle-embedded integrin alpha(iib) transmembrane segment"/>
    <property type="match status" value="1"/>
</dbReference>
<dbReference type="Gene3D" id="2.130.10.130">
    <property type="entry name" value="Integrin alpha, N-terminal"/>
    <property type="match status" value="2"/>
</dbReference>
<dbReference type="Gene3D" id="2.60.40.1460">
    <property type="entry name" value="Integrin domains. Chain A, domain 2"/>
    <property type="match status" value="1"/>
</dbReference>
<dbReference type="Gene3D" id="2.60.40.1510">
    <property type="entry name" value="ntegrin, alpha v. Chain A, domain 3"/>
    <property type="match status" value="1"/>
</dbReference>
<dbReference type="Gene3D" id="2.60.40.1530">
    <property type="entry name" value="ntegrin, alpha v. Chain A, domain 4"/>
    <property type="match status" value="1"/>
</dbReference>
<dbReference type="Gene3D" id="3.40.50.410">
    <property type="entry name" value="von Willebrand factor, type A domain"/>
    <property type="match status" value="1"/>
</dbReference>
<dbReference type="InterPro" id="IPR013517">
    <property type="entry name" value="FG-GAP"/>
</dbReference>
<dbReference type="InterPro" id="IPR013519">
    <property type="entry name" value="Int_alpha_beta-p"/>
</dbReference>
<dbReference type="InterPro" id="IPR000413">
    <property type="entry name" value="Integrin_alpha"/>
</dbReference>
<dbReference type="InterPro" id="IPR013649">
    <property type="entry name" value="Integrin_alpha_Ig-like_1"/>
</dbReference>
<dbReference type="InterPro" id="IPR048285">
    <property type="entry name" value="Integrin_alpha_Ig-like_2"/>
</dbReference>
<dbReference type="InterPro" id="IPR028994">
    <property type="entry name" value="Integrin_alpha_N"/>
</dbReference>
<dbReference type="InterPro" id="IPR032695">
    <property type="entry name" value="Integrin_dom_sf"/>
</dbReference>
<dbReference type="InterPro" id="IPR002035">
    <property type="entry name" value="VWF_A"/>
</dbReference>
<dbReference type="InterPro" id="IPR036465">
    <property type="entry name" value="vWFA_dom_sf"/>
</dbReference>
<dbReference type="PANTHER" id="PTHR23220">
    <property type="entry name" value="INTEGRIN ALPHA"/>
    <property type="match status" value="1"/>
</dbReference>
<dbReference type="PANTHER" id="PTHR23220:SF21">
    <property type="entry name" value="INTEGRIN ALPHA-11"/>
    <property type="match status" value="1"/>
</dbReference>
<dbReference type="Pfam" id="PF01839">
    <property type="entry name" value="FG-GAP"/>
    <property type="match status" value="2"/>
</dbReference>
<dbReference type="Pfam" id="PF08441">
    <property type="entry name" value="Integrin_A_Ig_1"/>
    <property type="match status" value="1"/>
</dbReference>
<dbReference type="Pfam" id="PF20805">
    <property type="entry name" value="Integrin_A_Ig_2"/>
    <property type="match status" value="1"/>
</dbReference>
<dbReference type="Pfam" id="PF00092">
    <property type="entry name" value="VWA"/>
    <property type="match status" value="1"/>
</dbReference>
<dbReference type="PRINTS" id="PR01185">
    <property type="entry name" value="INTEGRINA"/>
</dbReference>
<dbReference type="PRINTS" id="PR00453">
    <property type="entry name" value="VWFADOMAIN"/>
</dbReference>
<dbReference type="SMART" id="SM00191">
    <property type="entry name" value="Int_alpha"/>
    <property type="match status" value="5"/>
</dbReference>
<dbReference type="SMART" id="SM00327">
    <property type="entry name" value="VWA"/>
    <property type="match status" value="1"/>
</dbReference>
<dbReference type="SUPFAM" id="SSF69318">
    <property type="entry name" value="Integrin alpha N-terminal domain"/>
    <property type="match status" value="1"/>
</dbReference>
<dbReference type="SUPFAM" id="SSF69179">
    <property type="entry name" value="Integrin domains"/>
    <property type="match status" value="3"/>
</dbReference>
<dbReference type="SUPFAM" id="SSF53300">
    <property type="entry name" value="vWA-like"/>
    <property type="match status" value="1"/>
</dbReference>
<dbReference type="PROSITE" id="PS51470">
    <property type="entry name" value="FG_GAP"/>
    <property type="match status" value="7"/>
</dbReference>
<dbReference type="PROSITE" id="PS50234">
    <property type="entry name" value="VWFA"/>
    <property type="match status" value="1"/>
</dbReference>
<comment type="function">
    <text>Integrin alpha-11/beta-1 is a receptor for collagen.</text>
</comment>
<comment type="subunit">
    <text evidence="8">Heterodimer of an alpha and a beta subunit. Alpha-11 associates with beta-1. Interacts with RAB21.</text>
</comment>
<comment type="subcellular location">
    <subcellularLocation>
        <location>Membrane</location>
        <topology>Single-pass type I membrane protein</topology>
    </subcellularLocation>
</comment>
<comment type="alternative products">
    <event type="alternative splicing"/>
    <isoform>
        <id>Q9UKX5-1</id>
        <name>1</name>
        <sequence type="displayed"/>
    </isoform>
    <isoform>
        <id>Q9UKX5-2</id>
        <name>2</name>
        <sequence type="described" ref="VSP_053416"/>
    </isoform>
</comment>
<comment type="tissue specificity">
    <text evidence="6">According to PubMed:10464311, highest levels of expression in uterus and heart, intermediate levels in skeletal muscle and intermediate to low levels in pancreas, kidney and placenta. According to PubMed:10486209, also found in brain, colon, lung, small intestine, stomach, testis, salivary glands, thyroid glands and prostate. Very low levels in peripheral blood lymphocytes, fetal brain and fetal liver.</text>
</comment>
<comment type="developmental stage">
    <text>Strongly up-regulated in differentiating fetal muscle cells (in vitro).</text>
</comment>
<comment type="domain">
    <text>The integrin I-domain (insert) is a VWFA domain. Integrins with I-domains do not undergo protease cleavage.</text>
</comment>
<comment type="similarity">
    <text evidence="12">Belongs to the integrin alpha chain family.</text>
</comment>
<comment type="sequence caution" evidence="12">
    <conflict type="erroneous initiation">
        <sequence resource="EMBL-CDS" id="AAL39001"/>
    </conflict>
    <text>Truncated N-terminus.</text>
</comment>
<comment type="online information" name="Atlas of Genetics and Cytogenetics in Oncology and Haematology">
    <link uri="https://atlasgeneticsoncology.org/gene/41001/ITGA11"/>
</comment>
<accession>Q9UKX5</accession>
<accession>J3KQM2</accession>
<accession>Q8WYI8</accession>
<accession>Q9UKQ1</accession>
<protein>
    <recommendedName>
        <fullName>Integrin alpha-11</fullName>
    </recommendedName>
</protein>
<keyword id="KW-0025">Alternative splicing</keyword>
<keyword id="KW-0106">Calcium</keyword>
<keyword id="KW-0130">Cell adhesion</keyword>
<keyword id="KW-1015">Disulfide bond</keyword>
<keyword id="KW-0325">Glycoprotein</keyword>
<keyword id="KW-0401">Integrin</keyword>
<keyword id="KW-0460">Magnesium</keyword>
<keyword id="KW-0472">Membrane</keyword>
<keyword id="KW-0479">Metal-binding</keyword>
<keyword id="KW-1267">Proteomics identification</keyword>
<keyword id="KW-0675">Receptor</keyword>
<keyword id="KW-1185">Reference proteome</keyword>
<keyword id="KW-0677">Repeat</keyword>
<keyword id="KW-0732">Signal</keyword>
<keyword id="KW-0812">Transmembrane</keyword>
<keyword id="KW-1133">Transmembrane helix</keyword>
<reference key="1">
    <citation type="journal article" date="1999" name="Genomics">
        <title>Cloning, sequence analysis, and chromosomal localization of the novel human integrin alpha11 subunit (ITGA11).</title>
        <authorList>
            <person name="Lehnert K."/>
            <person name="Ni J."/>
            <person name="Leung E."/>
            <person name="Gough S.M."/>
            <person name="Weaver A."/>
            <person name="Yao W.P."/>
            <person name="Liu D."/>
            <person name="Wang S.-X."/>
            <person name="Morris C.M."/>
            <person name="Krissansen G.W."/>
        </authorList>
    </citation>
    <scope>NUCLEOTIDE SEQUENCE [MRNA] (ISOFORM 2)</scope>
    <scope>VARIANTS ARG-524; LEU-972 AND ILE-1003</scope>
    <source>
        <tissue>Fetal heart</tissue>
        <tissue>Osteoblast</tissue>
    </source>
</reference>
<reference key="2">
    <citation type="journal article" date="1999" name="J. Biol. Chem.">
        <title>cDNA cloning and chromosomal localization of human alpha(11) integrin. A collagen-binding, I domain-containing, beta(1)-associated integrin alpha-chain present in muscle tissues.</title>
        <authorList>
            <person name="Velling T."/>
            <person name="Kusche-Gullberg M."/>
            <person name="Sejersen T."/>
            <person name="Gullberg D."/>
        </authorList>
    </citation>
    <scope>NUCLEOTIDE SEQUENCE [MRNA] (ISOFORM 1)</scope>
    <scope>TISSUE SPECIFICITY</scope>
    <scope>VARIANTS ARG-524 AND LEU-972</scope>
    <source>
        <tissue>Fetal muscle</tissue>
        <tissue>Uterus</tissue>
    </source>
</reference>
<reference key="3">
    <citation type="journal article" date="2006" name="Nature">
        <title>Analysis of the DNA sequence and duplication history of human chromosome 15.</title>
        <authorList>
            <person name="Zody M.C."/>
            <person name="Garber M."/>
            <person name="Sharpe T."/>
            <person name="Young S.K."/>
            <person name="Rowen L."/>
            <person name="O'Neill K."/>
            <person name="Whittaker C.A."/>
            <person name="Kamal M."/>
            <person name="Chang J.L."/>
            <person name="Cuomo C.A."/>
            <person name="Dewar K."/>
            <person name="FitzGerald M.G."/>
            <person name="Kodira C.D."/>
            <person name="Madan A."/>
            <person name="Qin S."/>
            <person name="Yang X."/>
            <person name="Abbasi N."/>
            <person name="Abouelleil A."/>
            <person name="Arachchi H.M."/>
            <person name="Baradarani L."/>
            <person name="Birditt B."/>
            <person name="Bloom S."/>
            <person name="Bloom T."/>
            <person name="Borowsky M.L."/>
            <person name="Burke J."/>
            <person name="Butler J."/>
            <person name="Cook A."/>
            <person name="DeArellano K."/>
            <person name="DeCaprio D."/>
            <person name="Dorris L. III"/>
            <person name="Dors M."/>
            <person name="Eichler E.E."/>
            <person name="Engels R."/>
            <person name="Fahey J."/>
            <person name="Fleetwood P."/>
            <person name="Friedman C."/>
            <person name="Gearin G."/>
            <person name="Hall J.L."/>
            <person name="Hensley G."/>
            <person name="Johnson E."/>
            <person name="Jones C."/>
            <person name="Kamat A."/>
            <person name="Kaur A."/>
            <person name="Locke D.P."/>
            <person name="Madan A."/>
            <person name="Munson G."/>
            <person name="Jaffe D.B."/>
            <person name="Lui A."/>
            <person name="Macdonald P."/>
            <person name="Mauceli E."/>
            <person name="Naylor J.W."/>
            <person name="Nesbitt R."/>
            <person name="Nicol R."/>
            <person name="O'Leary S.B."/>
            <person name="Ratcliffe A."/>
            <person name="Rounsley S."/>
            <person name="She X."/>
            <person name="Sneddon K.M.B."/>
            <person name="Stewart S."/>
            <person name="Sougnez C."/>
            <person name="Stone S.M."/>
            <person name="Topham K."/>
            <person name="Vincent D."/>
            <person name="Wang S."/>
            <person name="Zimmer A.R."/>
            <person name="Birren B.W."/>
            <person name="Hood L."/>
            <person name="Lander E.S."/>
            <person name="Nusbaum C."/>
        </authorList>
    </citation>
    <scope>NUCLEOTIDE SEQUENCE [LARGE SCALE GENOMIC DNA]</scope>
</reference>
<reference key="4">
    <citation type="submission" date="1998-12" db="EMBL/GenBank/DDBJ databases">
        <authorList>
            <person name="Xu Y.Y."/>
            <person name="Sun L.Z."/>
            <person name="Wu Q.Y."/>
            <person name="Liu Y.Q."/>
            <person name="Liu B."/>
            <person name="Zhao B."/>
            <person name="Wang X.Y."/>
            <person name="Song L."/>
            <person name="Ye J."/>
            <person name="Sheng H."/>
            <person name="Gao Y."/>
            <person name="Zhang C.L."/>
            <person name="Zhang J."/>
            <person name="Wei Y.J."/>
            <person name="Sun Y.H."/>
            <person name="Jiang Y.X."/>
            <person name="Zhao X.W."/>
            <person name="Liu S."/>
            <person name="Liu L.S."/>
            <person name="Ding J.F."/>
            <person name="Gao R.L."/>
            <person name="Qiang B.Q."/>
            <person name="Yuan J.G."/>
            <person name="Liew C.C."/>
            <person name="Zhao M.S."/>
            <person name="Hui R.T."/>
        </authorList>
    </citation>
    <scope>NUCLEOTIDE SEQUENCE [LARGE SCALE MRNA] OF 317-1188 (ISOFORM 1)</scope>
    <scope>VARIANTS ARG-524 AND LEU-972</scope>
    <source>
        <tissue>Aorta</tissue>
    </source>
</reference>
<reference key="5">
    <citation type="submission" date="2000-06" db="EMBL/GenBank/DDBJ databases">
        <authorList>
            <consortium name="The European IMAGE consortium"/>
        </authorList>
    </citation>
    <scope>NUCLEOTIDE SEQUENCE [LARGE SCALE MRNA] OF 954-1188 (ISOFORM 1)</scope>
    <source>
        <tissue>Fibroblast</tissue>
    </source>
</reference>
<reference key="6">
    <citation type="journal article" date="2006" name="J. Cell Biol.">
        <title>Small GTPase Rab21 regulates cell adhesion and controls endosomal traffic of beta1-integrins.</title>
        <authorList>
            <person name="Pellinen T."/>
            <person name="Arjonen A."/>
            <person name="Vuoriluoto K."/>
            <person name="Kallio K."/>
            <person name="Fransen J.A.M."/>
            <person name="Ivaska J."/>
        </authorList>
    </citation>
    <scope>INTERACTION WITH RAB21</scope>
    <scope>MUTAGENESIS OF ARG-1170</scope>
</reference>
<reference key="7">
    <citation type="journal article" date="2009" name="J. Proteome Res.">
        <title>Glycoproteomics analysis of human liver tissue by combination of multiple enzyme digestion and hydrazide chemistry.</title>
        <authorList>
            <person name="Chen R."/>
            <person name="Jiang X."/>
            <person name="Sun D."/>
            <person name="Han G."/>
            <person name="Wang F."/>
            <person name="Ye M."/>
            <person name="Wang L."/>
            <person name="Zou H."/>
        </authorList>
    </citation>
    <scope>GLYCOSYLATION [LARGE SCALE ANALYSIS] AT ASN-331</scope>
    <source>
        <tissue>Liver</tissue>
    </source>
</reference>
<organism>
    <name type="scientific">Homo sapiens</name>
    <name type="common">Human</name>
    <dbReference type="NCBI Taxonomy" id="9606"/>
    <lineage>
        <taxon>Eukaryota</taxon>
        <taxon>Metazoa</taxon>
        <taxon>Chordata</taxon>
        <taxon>Craniata</taxon>
        <taxon>Vertebrata</taxon>
        <taxon>Euteleostomi</taxon>
        <taxon>Mammalia</taxon>
        <taxon>Eutheria</taxon>
        <taxon>Euarchontoglires</taxon>
        <taxon>Primates</taxon>
        <taxon>Haplorrhini</taxon>
        <taxon>Catarrhini</taxon>
        <taxon>Hominidae</taxon>
        <taxon>Homo</taxon>
    </lineage>
</organism>
<sequence>MDLPRGLVVAWALSLWPGFTDTFNMDTRKPRVIPGSRTAFFGYTVQQHDISGNKWLVVGAPLETNGYQKTGDVYKCPVIHGNCTKLNLGRVTLSNVSERKDNMRLGLSLATNPKDNSFLACSPLWSHECGSSYYTTGMCSRVNSNFRFSKTVAPALQRCQTYMDIVIVLDGSNSIYPWVEVQHFLINILKKFYIGPGQIQVGVVQYGEDVVHEFHLNDYRSVKDVVEAASHIEQRGGTETRTAFGIEFARSEAFQKGGRKGAKKVMIVITDGESHDSPDLEKVIQQSERDNVTRYAVAVLGYYNRRGINPETFLNEIKYIASDPDDKHFFNVTDEAALKDIVDALGDRIFSLEGTNKNETSFGLEMSQTGFSSHVVEDGVLLGAVGAYDWNGAVLKETSAGKVIPLRESYLKEFPEELKNHGAYLGYTVTSVVSSRQGRVYVAGAPRFNHTGKVILFTMHNNRSLTIHQAMRGQQIGSYFGSEITSVDIDGDGVTDVLLVGAPMYFNEGRERGKVYVYELRQNLFVYNGTLKDSHSYQNARFGSSIASVRDLNQDSYNDVVVGAPLEDNHAGAIYIFHGFRGSILKTPKQRITASELATGLQYFGCSIHGQLDLNEDGLIDLAVGALGNAVILWSRPVVQINASLHFEPSKINIFHRDCKRSGRDATCLAAFLCFTPIFLAPHFQTTTVGIRYNATMDERRYTPRAHLDEGGDRFTNRAVLLSSGQELCERINFHVLDTADYVKPVTFSVEYSLEDPDHGPMLDDGWPTTLRVSVPFWNGCNEDEHCVPDLVLDARSDLPTAMEYCQRVLRKPAQDCSAYTLSFDTTVFIIESTRQRVAVEATLENRGENAYSTVLNISQSANLQFASLIQKEDSDGSIECVNEERRLQKQVCNVSYPFFRAKAKVAFRLDFEFSKSIFLHHLEIELAAGSDSNERDSTKEDNVAPLRFHLKYEADVLFTRSSSLSHYEVKPNSSLERYDGIGPPFSCIFRIQNLGLFPIHGMMMKITIPIATRSGNRLLKLRDFLTDEANTSCNIWGNSTEYRPTPVEEDLRRAPQLNHSNSDVVSINCNIRLVPNQEINFHLLGNLWLRSLKALKYKSMKIMVNAALQRQFHSPFIFREEDPSRQIVFEISKQEDWQVPIWIIVGSTLGGLLLLALLVLALWKLGFFRSARRRREPGLDPTPKVLE</sequence>
<name>ITA11_HUMAN</name>
<gene>
    <name type="primary">ITGA11</name>
    <name type="ORF">MSTP018</name>
</gene>
<feature type="signal peptide" evidence="3">
    <location>
        <begin position="1"/>
        <end position="22"/>
    </location>
</feature>
<feature type="chain" id="PRO_0000016318" description="Integrin alpha-11">
    <location>
        <begin position="23"/>
        <end position="1188"/>
    </location>
</feature>
<feature type="topological domain" description="Extracellular" evidence="3">
    <location>
        <begin position="23"/>
        <end position="1141"/>
    </location>
</feature>
<feature type="transmembrane region" description="Helical" evidence="3">
    <location>
        <begin position="1142"/>
        <end position="1164"/>
    </location>
</feature>
<feature type="topological domain" description="Cytoplasmic" evidence="3">
    <location>
        <begin position="1165"/>
        <end position="1188"/>
    </location>
</feature>
<feature type="repeat" description="FG-GAP 1" evidence="5">
    <location>
        <begin position="24"/>
        <end position="85"/>
    </location>
</feature>
<feature type="repeat" description="FG-GAP 2" evidence="5">
    <location>
        <begin position="91"/>
        <end position="151"/>
    </location>
</feature>
<feature type="domain" description="VWFA" evidence="4">
    <location>
        <begin position="164"/>
        <end position="345"/>
    </location>
</feature>
<feature type="repeat" description="FG-GAP 3" evidence="5">
    <location>
        <begin position="355"/>
        <end position="406"/>
    </location>
</feature>
<feature type="repeat" description="FG-GAP 4" evidence="5">
    <location>
        <begin position="411"/>
        <end position="461"/>
    </location>
</feature>
<feature type="repeat" description="FG-GAP 5" evidence="5">
    <location>
        <begin position="462"/>
        <end position="527"/>
    </location>
</feature>
<feature type="repeat" description="FG-GAP 6" evidence="5">
    <location>
        <begin position="528"/>
        <end position="586"/>
    </location>
</feature>
<feature type="repeat" description="FG-GAP 7" evidence="5">
    <location>
        <begin position="590"/>
        <end position="650"/>
    </location>
</feature>
<feature type="binding site" evidence="2">
    <location>
        <position position="488"/>
    </location>
    <ligand>
        <name>Ca(2+)</name>
        <dbReference type="ChEBI" id="CHEBI:29108"/>
        <label>1</label>
    </ligand>
</feature>
<feature type="binding site" evidence="2">
    <location>
        <position position="490"/>
    </location>
    <ligand>
        <name>Ca(2+)</name>
        <dbReference type="ChEBI" id="CHEBI:29108"/>
        <label>1</label>
    </ligand>
</feature>
<feature type="binding site" evidence="2">
    <location>
        <position position="492"/>
    </location>
    <ligand>
        <name>Ca(2+)</name>
        <dbReference type="ChEBI" id="CHEBI:29108"/>
        <label>1</label>
    </ligand>
</feature>
<feature type="binding site" evidence="2">
    <location>
        <position position="496"/>
    </location>
    <ligand>
        <name>Ca(2+)</name>
        <dbReference type="ChEBI" id="CHEBI:29108"/>
        <label>1</label>
    </ligand>
</feature>
<feature type="binding site" evidence="2">
    <location>
        <position position="551"/>
    </location>
    <ligand>
        <name>Ca(2+)</name>
        <dbReference type="ChEBI" id="CHEBI:29108"/>
        <label>2</label>
    </ligand>
</feature>
<feature type="binding site" evidence="2">
    <location>
        <position position="553"/>
    </location>
    <ligand>
        <name>Ca(2+)</name>
        <dbReference type="ChEBI" id="CHEBI:29108"/>
        <label>2</label>
    </ligand>
</feature>
<feature type="binding site" evidence="2">
    <location>
        <position position="555"/>
    </location>
    <ligand>
        <name>Ca(2+)</name>
        <dbReference type="ChEBI" id="CHEBI:29108"/>
        <label>2</label>
    </ligand>
</feature>
<feature type="binding site" evidence="2">
    <location>
        <position position="559"/>
    </location>
    <ligand>
        <name>Ca(2+)</name>
        <dbReference type="ChEBI" id="CHEBI:29108"/>
        <label>2</label>
    </ligand>
</feature>
<feature type="binding site" evidence="2">
    <location>
        <position position="613"/>
    </location>
    <ligand>
        <name>Ca(2+)</name>
        <dbReference type="ChEBI" id="CHEBI:29108"/>
        <label>3</label>
    </ligand>
</feature>
<feature type="binding site" evidence="2">
    <location>
        <position position="615"/>
    </location>
    <ligand>
        <name>Ca(2+)</name>
        <dbReference type="ChEBI" id="CHEBI:29108"/>
        <label>3</label>
    </ligand>
</feature>
<feature type="binding site" evidence="2">
    <location>
        <position position="617"/>
    </location>
    <ligand>
        <name>Ca(2+)</name>
        <dbReference type="ChEBI" id="CHEBI:29108"/>
        <label>3</label>
    </ligand>
</feature>
<feature type="binding site" evidence="2">
    <location>
        <position position="621"/>
    </location>
    <ligand>
        <name>Ca(2+)</name>
        <dbReference type="ChEBI" id="CHEBI:29108"/>
        <label>3</label>
    </ligand>
</feature>
<feature type="glycosylation site" description="N-linked (GlcNAc...) asparagine" evidence="3">
    <location>
        <position position="82"/>
    </location>
</feature>
<feature type="glycosylation site" description="N-linked (GlcNAc...) asparagine" evidence="3">
    <location>
        <position position="95"/>
    </location>
</feature>
<feature type="glycosylation site" description="N-linked (GlcNAc...) asparagine" evidence="3">
    <location>
        <position position="291"/>
    </location>
</feature>
<feature type="glycosylation site" description="N-linked (GlcNAc...) asparagine" evidence="9">
    <location>
        <position position="331"/>
    </location>
</feature>
<feature type="glycosylation site" description="N-linked (GlcNAc...) asparagine" evidence="3">
    <location>
        <position position="358"/>
    </location>
</feature>
<feature type="glycosylation site" description="N-linked (GlcNAc...) asparagine" evidence="3">
    <location>
        <position position="449"/>
    </location>
</feature>
<feature type="glycosylation site" description="N-linked (GlcNAc...) asparagine" evidence="3">
    <location>
        <position position="462"/>
    </location>
</feature>
<feature type="glycosylation site" description="N-linked (GlcNAc...) asparagine" evidence="3">
    <location>
        <position position="528"/>
    </location>
</feature>
<feature type="glycosylation site" description="N-linked (GlcNAc...) asparagine" evidence="3">
    <location>
        <position position="642"/>
    </location>
</feature>
<feature type="glycosylation site" description="N-linked (GlcNAc...) asparagine" evidence="3">
    <location>
        <position position="694"/>
    </location>
</feature>
<feature type="glycosylation site" description="N-linked (GlcNAc...) asparagine" evidence="3">
    <location>
        <position position="857"/>
    </location>
</feature>
<feature type="glycosylation site" description="N-linked (GlcNAc...) asparagine" evidence="3">
    <location>
        <position position="894"/>
    </location>
</feature>
<feature type="glycosylation site" description="N-linked (GlcNAc...) asparagine" evidence="3">
    <location>
        <position position="973"/>
    </location>
</feature>
<feature type="glycosylation site" description="N-linked (GlcNAc...) asparagine" evidence="3">
    <location>
        <position position="1031"/>
    </location>
</feature>
<feature type="glycosylation site" description="N-linked (GlcNAc...) asparagine" evidence="3">
    <location>
        <position position="1039"/>
    </location>
</feature>
<feature type="glycosylation site" description="N-linked (GlcNAc...) asparagine" evidence="3">
    <location>
        <position position="1059"/>
    </location>
</feature>
<feature type="disulfide bond" evidence="1">
    <location>
        <begin position="76"/>
        <end position="83"/>
    </location>
</feature>
<feature type="disulfide bond" evidence="3">
    <location>
        <begin position="121"/>
        <end position="139"/>
    </location>
</feature>
<feature type="disulfide bond" evidence="3">
    <location>
        <begin position="129"/>
        <end position="159"/>
    </location>
</feature>
<feature type="disulfide bond" evidence="1">
    <location>
        <begin position="659"/>
        <end position="668"/>
    </location>
</feature>
<feature type="disulfide bond" evidence="1">
    <location>
        <begin position="674"/>
        <end position="729"/>
    </location>
</feature>
<feature type="disulfide bond" evidence="1">
    <location>
        <begin position="781"/>
        <end position="787"/>
    </location>
</feature>
<feature type="disulfide bond" evidence="1">
    <location>
        <begin position="881"/>
        <end position="893"/>
    </location>
</feature>
<feature type="splice variant" id="VSP_053416" description="In isoform 2." evidence="11">
    <original>E</original>
    <variation>EV</variation>
    <location>
        <position position="1029"/>
    </location>
</feature>
<feature type="sequence variant" id="VAR_009889" description="In dbSNP:rs2306022.">
    <original>V</original>
    <variation>M</variation>
    <location>
        <position position="433"/>
    </location>
</feature>
<feature type="sequence variant" id="VAR_020038" description="In dbSNP:rs2306024.">
    <original>M</original>
    <variation>L</variation>
    <location>
        <position position="471"/>
    </location>
</feature>
<feature type="sequence variant" id="VAR_009890" description="In dbSNP:rs7168069." evidence="6 7 10">
    <original>L</original>
    <variation>R</variation>
    <location>
        <position position="524"/>
    </location>
</feature>
<feature type="sequence variant" id="VAR_020039" description="In dbSNP:rs2271725.">
    <original>Q</original>
    <variation>K</variation>
    <location>
        <position position="891"/>
    </location>
</feature>
<feature type="sequence variant" id="VAR_009891" description="In dbSNP:rs4777035." evidence="6 7 10">
    <original>P</original>
    <variation>L</variation>
    <location>
        <position position="972"/>
    </location>
</feature>
<feature type="sequence variant" id="VAR_009892" evidence="7">
    <original>M</original>
    <variation>I</variation>
    <location>
        <position position="1003"/>
    </location>
</feature>
<feature type="sequence variant" id="VAR_009894">
    <original>L</original>
    <variation>V</variation>
    <location>
        <position position="1093"/>
    </location>
</feature>
<feature type="mutagenesis site" description="No effect on RAB21-binding." evidence="8">
    <original>R</original>
    <variation>A</variation>
    <location>
        <position position="1170"/>
    </location>
</feature>
<proteinExistence type="evidence at protein level"/>